<evidence type="ECO:0000256" key="1">
    <source>
        <dbReference type="SAM" id="MobiDB-lite"/>
    </source>
</evidence>
<evidence type="ECO:0000305" key="2"/>
<keyword id="KW-0238">DNA-binding</keyword>
<keyword id="KW-1185">Reference proteome</keyword>
<reference key="1">
    <citation type="journal article" date="2005" name="Nature">
        <title>The genome of the social amoeba Dictyostelium discoideum.</title>
        <authorList>
            <person name="Eichinger L."/>
            <person name="Pachebat J.A."/>
            <person name="Gloeckner G."/>
            <person name="Rajandream M.A."/>
            <person name="Sucgang R."/>
            <person name="Berriman M."/>
            <person name="Song J."/>
            <person name="Olsen R."/>
            <person name="Szafranski K."/>
            <person name="Xu Q."/>
            <person name="Tunggal B."/>
            <person name="Kummerfeld S."/>
            <person name="Madera M."/>
            <person name="Konfortov B.A."/>
            <person name="Rivero F."/>
            <person name="Bankier A.T."/>
            <person name="Lehmann R."/>
            <person name="Hamlin N."/>
            <person name="Davies R."/>
            <person name="Gaudet P."/>
            <person name="Fey P."/>
            <person name="Pilcher K."/>
            <person name="Chen G."/>
            <person name="Saunders D."/>
            <person name="Sodergren E.J."/>
            <person name="Davis P."/>
            <person name="Kerhornou A."/>
            <person name="Nie X."/>
            <person name="Hall N."/>
            <person name="Anjard C."/>
            <person name="Hemphill L."/>
            <person name="Bason N."/>
            <person name="Farbrother P."/>
            <person name="Desany B."/>
            <person name="Just E."/>
            <person name="Morio T."/>
            <person name="Rost R."/>
            <person name="Churcher C.M."/>
            <person name="Cooper J."/>
            <person name="Haydock S."/>
            <person name="van Driessche N."/>
            <person name="Cronin A."/>
            <person name="Goodhead I."/>
            <person name="Muzny D.M."/>
            <person name="Mourier T."/>
            <person name="Pain A."/>
            <person name="Lu M."/>
            <person name="Harper D."/>
            <person name="Lindsay R."/>
            <person name="Hauser H."/>
            <person name="James K.D."/>
            <person name="Quiles M."/>
            <person name="Madan Babu M."/>
            <person name="Saito T."/>
            <person name="Buchrieser C."/>
            <person name="Wardroper A."/>
            <person name="Felder M."/>
            <person name="Thangavelu M."/>
            <person name="Johnson D."/>
            <person name="Knights A."/>
            <person name="Loulseged H."/>
            <person name="Mungall K.L."/>
            <person name="Oliver K."/>
            <person name="Price C."/>
            <person name="Quail M.A."/>
            <person name="Urushihara H."/>
            <person name="Hernandez J."/>
            <person name="Rabbinowitsch E."/>
            <person name="Steffen D."/>
            <person name="Sanders M."/>
            <person name="Ma J."/>
            <person name="Kohara Y."/>
            <person name="Sharp S."/>
            <person name="Simmonds M.N."/>
            <person name="Spiegler S."/>
            <person name="Tivey A."/>
            <person name="Sugano S."/>
            <person name="White B."/>
            <person name="Walker D."/>
            <person name="Woodward J.R."/>
            <person name="Winckler T."/>
            <person name="Tanaka Y."/>
            <person name="Shaulsky G."/>
            <person name="Schleicher M."/>
            <person name="Weinstock G.M."/>
            <person name="Rosenthal A."/>
            <person name="Cox E.C."/>
            <person name="Chisholm R.L."/>
            <person name="Gibbs R.A."/>
            <person name="Loomis W.F."/>
            <person name="Platzer M."/>
            <person name="Kay R.R."/>
            <person name="Williams J.G."/>
            <person name="Dear P.H."/>
            <person name="Noegel A.A."/>
            <person name="Barrell B.G."/>
            <person name="Kuspa A."/>
        </authorList>
    </citation>
    <scope>NUCLEOTIDE SEQUENCE [LARGE SCALE GENOMIC DNA]</scope>
    <source>
        <strain>AX4</strain>
    </source>
</reference>
<comment type="similarity">
    <text evidence="2">Belongs to the PDCD5 family.</text>
</comment>
<sequence length="117" mass="13574">MSSEKEIQQQLSQMQGQGFDPEAQQRQEAQRQEANERRQGILIQILTPDARERLSRITIVKPEKSRQIEDLIIRAAQTGQLTERVDDAKLISLLEQLSEKTKKTTITMKRRTIEDDD</sequence>
<proteinExistence type="inferred from homology"/>
<organism>
    <name type="scientific">Dictyostelium discoideum</name>
    <name type="common">Social amoeba</name>
    <dbReference type="NCBI Taxonomy" id="44689"/>
    <lineage>
        <taxon>Eukaryota</taxon>
        <taxon>Amoebozoa</taxon>
        <taxon>Evosea</taxon>
        <taxon>Eumycetozoa</taxon>
        <taxon>Dictyostelia</taxon>
        <taxon>Dictyosteliales</taxon>
        <taxon>Dictyosteliaceae</taxon>
        <taxon>Dictyostelium</taxon>
    </lineage>
</organism>
<protein>
    <recommendedName>
        <fullName>DNA-binding protein DDB_G0278111</fullName>
    </recommendedName>
</protein>
<gene>
    <name type="ORF">DDB_G0278111</name>
</gene>
<name>Y8111_DICDI</name>
<accession>Q54YS0</accession>
<feature type="chain" id="PRO_0000377434" description="DNA-binding protein DDB_G0278111">
    <location>
        <begin position="1"/>
        <end position="117"/>
    </location>
</feature>
<feature type="region of interest" description="Disordered" evidence="1">
    <location>
        <begin position="1"/>
        <end position="40"/>
    </location>
</feature>
<feature type="compositionally biased region" description="Low complexity" evidence="1">
    <location>
        <begin position="8"/>
        <end position="22"/>
    </location>
</feature>
<feature type="compositionally biased region" description="Basic and acidic residues" evidence="1">
    <location>
        <begin position="23"/>
        <end position="39"/>
    </location>
</feature>
<dbReference type="EMBL" id="AAFI02000023">
    <property type="protein sequence ID" value="EAL68228.2"/>
    <property type="molecule type" value="Genomic_DNA"/>
</dbReference>
<dbReference type="RefSeq" id="XP_642132.2">
    <property type="nucleotide sequence ID" value="XM_637040.2"/>
</dbReference>
<dbReference type="SMR" id="Q54YS0"/>
<dbReference type="FunCoup" id="Q54YS0">
    <property type="interactions" value="426"/>
</dbReference>
<dbReference type="STRING" id="44689.Q54YS0"/>
<dbReference type="PaxDb" id="44689-DDB0304682"/>
<dbReference type="EnsemblProtists" id="EAL68228">
    <property type="protein sequence ID" value="EAL68228"/>
    <property type="gene ID" value="DDB_G0278111"/>
</dbReference>
<dbReference type="GeneID" id="8621340"/>
<dbReference type="KEGG" id="ddi:DDB_G0278111"/>
<dbReference type="dictyBase" id="DDB_G0278111"/>
<dbReference type="VEuPathDB" id="AmoebaDB:DDB_G0278111"/>
<dbReference type="eggNOG" id="KOG3431">
    <property type="taxonomic scope" value="Eukaryota"/>
</dbReference>
<dbReference type="HOGENOM" id="CLU_122978_2_1_1"/>
<dbReference type="InParanoid" id="Q54YS0"/>
<dbReference type="OMA" id="MQYEMQK"/>
<dbReference type="PhylomeDB" id="Q54YS0"/>
<dbReference type="PRO" id="PR:Q54YS0"/>
<dbReference type="Proteomes" id="UP000002195">
    <property type="component" value="Chromosome 3"/>
</dbReference>
<dbReference type="GO" id="GO:0005829">
    <property type="term" value="C:cytosol"/>
    <property type="evidence" value="ECO:0000318"/>
    <property type="project" value="GO_Central"/>
</dbReference>
<dbReference type="GO" id="GO:0005634">
    <property type="term" value="C:nucleus"/>
    <property type="evidence" value="ECO:0000318"/>
    <property type="project" value="GO_Central"/>
</dbReference>
<dbReference type="GO" id="GO:0003677">
    <property type="term" value="F:DNA binding"/>
    <property type="evidence" value="ECO:0007669"/>
    <property type="project" value="UniProtKB-KW"/>
</dbReference>
<dbReference type="FunFam" id="1.10.8.140:FF:000011">
    <property type="entry name" value="Double-stranded DNA-binding domain containing protein"/>
    <property type="match status" value="1"/>
</dbReference>
<dbReference type="Gene3D" id="1.10.8.140">
    <property type="entry name" value="PDCD5-like"/>
    <property type="match status" value="1"/>
</dbReference>
<dbReference type="InterPro" id="IPR002836">
    <property type="entry name" value="PDCD5-like"/>
</dbReference>
<dbReference type="InterPro" id="IPR036883">
    <property type="entry name" value="PDCD5-like_sf"/>
</dbReference>
<dbReference type="PANTHER" id="PTHR10840">
    <property type="entry name" value="PROGRAMMED CELL DEATH PROTEIN 5"/>
    <property type="match status" value="1"/>
</dbReference>
<dbReference type="PANTHER" id="PTHR10840:SF0">
    <property type="entry name" value="PROGRAMMED CELL DEATH PROTEIN 5"/>
    <property type="match status" value="1"/>
</dbReference>
<dbReference type="Pfam" id="PF01984">
    <property type="entry name" value="dsDNA_bind"/>
    <property type="match status" value="1"/>
</dbReference>
<dbReference type="PIRSF" id="PIRSF015730">
    <property type="entry name" value="TFAR19"/>
    <property type="match status" value="1"/>
</dbReference>
<dbReference type="SUPFAM" id="SSF46950">
    <property type="entry name" value="Double-stranded DNA-binding domain"/>
    <property type="match status" value="1"/>
</dbReference>